<sequence length="174" mass="19411">MASGDVLPRFYTVFLSCVSSNSLLIPRSYYEHLPRRLPKTAILTGTGGRVWKVAMMSKREQVYLARGWENFVADNELKDGEFLTFVFDGYKSYEVSIYGRGSCKETRAVVHVEEISDESESDNDSLGSLVDVTPMPAEENSDDTEGDNDSCDSVVDVTPMPVEEISDASDSDYY</sequence>
<reference key="1">
    <citation type="journal article" date="2000" name="Nature">
        <title>Sequence and analysis of chromosome 3 of the plant Arabidopsis thaliana.</title>
        <authorList>
            <person name="Salanoubat M."/>
            <person name="Lemcke K."/>
            <person name="Rieger M."/>
            <person name="Ansorge W."/>
            <person name="Unseld M."/>
            <person name="Fartmann B."/>
            <person name="Valle G."/>
            <person name="Bloecker H."/>
            <person name="Perez-Alonso M."/>
            <person name="Obermaier B."/>
            <person name="Delseny M."/>
            <person name="Boutry M."/>
            <person name="Grivell L.A."/>
            <person name="Mache R."/>
            <person name="Puigdomenech P."/>
            <person name="De Simone V."/>
            <person name="Choisne N."/>
            <person name="Artiguenave F."/>
            <person name="Robert C."/>
            <person name="Brottier P."/>
            <person name="Wincker P."/>
            <person name="Cattolico L."/>
            <person name="Weissenbach J."/>
            <person name="Saurin W."/>
            <person name="Quetier F."/>
            <person name="Schaefer M."/>
            <person name="Mueller-Auer S."/>
            <person name="Gabel C."/>
            <person name="Fuchs M."/>
            <person name="Benes V."/>
            <person name="Wurmbach E."/>
            <person name="Drzonek H."/>
            <person name="Erfle H."/>
            <person name="Jordan N."/>
            <person name="Bangert S."/>
            <person name="Wiedelmann R."/>
            <person name="Kranz H."/>
            <person name="Voss H."/>
            <person name="Holland R."/>
            <person name="Brandt P."/>
            <person name="Nyakatura G."/>
            <person name="Vezzi A."/>
            <person name="D'Angelo M."/>
            <person name="Pallavicini A."/>
            <person name="Toppo S."/>
            <person name="Simionati B."/>
            <person name="Conrad A."/>
            <person name="Hornischer K."/>
            <person name="Kauer G."/>
            <person name="Loehnert T.-H."/>
            <person name="Nordsiek G."/>
            <person name="Reichelt J."/>
            <person name="Scharfe M."/>
            <person name="Schoen O."/>
            <person name="Bargues M."/>
            <person name="Terol J."/>
            <person name="Climent J."/>
            <person name="Navarro P."/>
            <person name="Collado C."/>
            <person name="Perez-Perez A."/>
            <person name="Ottenwaelder B."/>
            <person name="Duchemin D."/>
            <person name="Cooke R."/>
            <person name="Laudie M."/>
            <person name="Berger-Llauro C."/>
            <person name="Purnelle B."/>
            <person name="Masuy D."/>
            <person name="de Haan M."/>
            <person name="Maarse A.C."/>
            <person name="Alcaraz J.-P."/>
            <person name="Cottet A."/>
            <person name="Casacuberta E."/>
            <person name="Monfort A."/>
            <person name="Argiriou A."/>
            <person name="Flores M."/>
            <person name="Liguori R."/>
            <person name="Vitale D."/>
            <person name="Mannhaupt G."/>
            <person name="Haase D."/>
            <person name="Schoof H."/>
            <person name="Rudd S."/>
            <person name="Zaccaria P."/>
            <person name="Mewes H.-W."/>
            <person name="Mayer K.F.X."/>
            <person name="Kaul S."/>
            <person name="Town C.D."/>
            <person name="Koo H.L."/>
            <person name="Tallon L.J."/>
            <person name="Jenkins J."/>
            <person name="Rooney T."/>
            <person name="Rizzo M."/>
            <person name="Walts A."/>
            <person name="Utterback T."/>
            <person name="Fujii C.Y."/>
            <person name="Shea T.P."/>
            <person name="Creasy T.H."/>
            <person name="Haas B."/>
            <person name="Maiti R."/>
            <person name="Wu D."/>
            <person name="Peterson J."/>
            <person name="Van Aken S."/>
            <person name="Pai G."/>
            <person name="Militscher J."/>
            <person name="Sellers P."/>
            <person name="Gill J.E."/>
            <person name="Feldblyum T.V."/>
            <person name="Preuss D."/>
            <person name="Lin X."/>
            <person name="Nierman W.C."/>
            <person name="Salzberg S.L."/>
            <person name="White O."/>
            <person name="Venter J.C."/>
            <person name="Fraser C.M."/>
            <person name="Kaneko T."/>
            <person name="Nakamura Y."/>
            <person name="Sato S."/>
            <person name="Kato T."/>
            <person name="Asamizu E."/>
            <person name="Sasamoto S."/>
            <person name="Kimura T."/>
            <person name="Idesawa K."/>
            <person name="Kawashima K."/>
            <person name="Kishida Y."/>
            <person name="Kiyokawa C."/>
            <person name="Kohara M."/>
            <person name="Matsumoto M."/>
            <person name="Matsuno A."/>
            <person name="Muraki A."/>
            <person name="Nakayama S."/>
            <person name="Nakazaki N."/>
            <person name="Shinpo S."/>
            <person name="Takeuchi C."/>
            <person name="Wada T."/>
            <person name="Watanabe A."/>
            <person name="Yamada M."/>
            <person name="Yasuda M."/>
            <person name="Tabata S."/>
        </authorList>
    </citation>
    <scope>NUCLEOTIDE SEQUENCE [LARGE SCALE GENOMIC DNA]</scope>
    <source>
        <strain>cv. Columbia</strain>
    </source>
</reference>
<reference key="2">
    <citation type="journal article" date="2017" name="Plant J.">
        <title>Araport11: a complete reannotation of the Arabidopsis thaliana reference genome.</title>
        <authorList>
            <person name="Cheng C.Y."/>
            <person name="Krishnakumar V."/>
            <person name="Chan A.P."/>
            <person name="Thibaud-Nissen F."/>
            <person name="Schobel S."/>
            <person name="Town C.D."/>
        </authorList>
    </citation>
    <scope>GENOME REANNOTATION</scope>
    <source>
        <strain>cv. Columbia</strain>
    </source>
</reference>
<reference key="3">
    <citation type="journal article" date="2006" name="Plant Biotechnol. J.">
        <title>Simultaneous high-throughput recombinational cloning of open reading frames in closed and open configurations.</title>
        <authorList>
            <person name="Underwood B.A."/>
            <person name="Vanderhaeghen R."/>
            <person name="Whitford R."/>
            <person name="Town C.D."/>
            <person name="Hilson P."/>
        </authorList>
    </citation>
    <scope>NUCLEOTIDE SEQUENCE [LARGE SCALE MRNA]</scope>
    <source>
        <strain>cv. Columbia</strain>
    </source>
</reference>
<reference key="4">
    <citation type="submission" date="2009-03" db="EMBL/GenBank/DDBJ databases">
        <title>ORF cloning and analysis of Arabidopsis transcription factor genes.</title>
        <authorList>
            <person name="Fujita M."/>
            <person name="Mizukado S."/>
            <person name="Seki M."/>
            <person name="Shinozaki K."/>
            <person name="Mitsuda N."/>
            <person name="Takiguchi Y."/>
            <person name="Takagi M."/>
        </authorList>
    </citation>
    <scope>NUCLEOTIDE SEQUENCE [LARGE SCALE MRNA]</scope>
</reference>
<reference key="5">
    <citation type="journal article" date="2008" name="Trends Plant Sci.">
        <title>The plant B3 superfamily.</title>
        <authorList>
            <person name="Swaminathan K."/>
            <person name="Peterson K."/>
            <person name="Jack T."/>
        </authorList>
    </citation>
    <scope>GENE FAMILY</scope>
</reference>
<accession>Q1PES7</accession>
<accession>A0MEU6</accession>
<accession>Q9M8J6</accession>
<evidence type="ECO:0000255" key="1">
    <source>
        <dbReference type="PROSITE-ProRule" id="PRU00326"/>
    </source>
</evidence>
<evidence type="ECO:0000256" key="2">
    <source>
        <dbReference type="SAM" id="MobiDB-lite"/>
    </source>
</evidence>
<evidence type="ECO:0000305" key="3"/>
<dbReference type="EMBL" id="AC018907">
    <property type="protein sequence ID" value="AAF30315.1"/>
    <property type="status" value="ALT_SEQ"/>
    <property type="molecule type" value="Genomic_DNA"/>
</dbReference>
<dbReference type="EMBL" id="CP002686">
    <property type="protein sequence ID" value="AEE74362.1"/>
    <property type="molecule type" value="Genomic_DNA"/>
</dbReference>
<dbReference type="EMBL" id="DQ446640">
    <property type="protein sequence ID" value="ABE65921.1"/>
    <property type="molecule type" value="mRNA"/>
</dbReference>
<dbReference type="EMBL" id="DQ653069">
    <property type="protein sequence ID" value="ABK28546.1"/>
    <property type="status" value="ALT_SEQ"/>
    <property type="molecule type" value="mRNA"/>
</dbReference>
<dbReference type="EMBL" id="AB493604">
    <property type="protein sequence ID" value="BAH30442.1"/>
    <property type="molecule type" value="mRNA"/>
</dbReference>
<dbReference type="RefSeq" id="NP_187273.2">
    <property type="nucleotide sequence ID" value="NM_111497.3"/>
</dbReference>
<dbReference type="SMR" id="Q1PES7"/>
<dbReference type="BioGRID" id="5131">
    <property type="interactions" value="2"/>
</dbReference>
<dbReference type="FunCoup" id="Q1PES7">
    <property type="interactions" value="18"/>
</dbReference>
<dbReference type="IntAct" id="Q1PES7">
    <property type="interactions" value="2"/>
</dbReference>
<dbReference type="STRING" id="3702.Q1PES7"/>
<dbReference type="PaxDb" id="3702-AT3G06220.1"/>
<dbReference type="ProteomicsDB" id="243104"/>
<dbReference type="EnsemblPlants" id="AT3G06220.1">
    <property type="protein sequence ID" value="AT3G06220.1"/>
    <property type="gene ID" value="AT3G06220"/>
</dbReference>
<dbReference type="GeneID" id="819796"/>
<dbReference type="Gramene" id="AT3G06220.1">
    <property type="protein sequence ID" value="AT3G06220.1"/>
    <property type="gene ID" value="AT3G06220"/>
</dbReference>
<dbReference type="KEGG" id="ath:AT3G06220"/>
<dbReference type="Araport" id="AT3G06220"/>
<dbReference type="TAIR" id="AT3G06220"/>
<dbReference type="HOGENOM" id="CLU_125174_1_0_1"/>
<dbReference type="InParanoid" id="Q1PES7"/>
<dbReference type="OMA" id="VTPMPVE"/>
<dbReference type="PhylomeDB" id="Q1PES7"/>
<dbReference type="PRO" id="PR:Q1PES7"/>
<dbReference type="Proteomes" id="UP000006548">
    <property type="component" value="Chromosome 3"/>
</dbReference>
<dbReference type="ExpressionAtlas" id="Q1PES7">
    <property type="expression patterns" value="baseline and differential"/>
</dbReference>
<dbReference type="GO" id="GO:0005634">
    <property type="term" value="C:nucleus"/>
    <property type="evidence" value="ECO:0007669"/>
    <property type="project" value="UniProtKB-SubCell"/>
</dbReference>
<dbReference type="GO" id="GO:0003677">
    <property type="term" value="F:DNA binding"/>
    <property type="evidence" value="ECO:0007669"/>
    <property type="project" value="UniProtKB-KW"/>
</dbReference>
<dbReference type="CDD" id="cd10017">
    <property type="entry name" value="B3_DNA"/>
    <property type="match status" value="1"/>
</dbReference>
<dbReference type="Gene3D" id="2.40.330.10">
    <property type="entry name" value="DNA-binding pseudobarrel domain"/>
    <property type="match status" value="1"/>
</dbReference>
<dbReference type="InterPro" id="IPR003340">
    <property type="entry name" value="B3_DNA-bd"/>
</dbReference>
<dbReference type="InterPro" id="IPR015300">
    <property type="entry name" value="DNA-bd_pseudobarrel_sf"/>
</dbReference>
<dbReference type="InterPro" id="IPR050655">
    <property type="entry name" value="Plant_B3_domain"/>
</dbReference>
<dbReference type="PANTHER" id="PTHR31920">
    <property type="entry name" value="B3 DOMAIN-CONTAINING"/>
    <property type="match status" value="1"/>
</dbReference>
<dbReference type="PANTHER" id="PTHR31920:SF54">
    <property type="entry name" value="B3 DOMAIN-CONTAINING PROTEIN REM21"/>
    <property type="match status" value="1"/>
</dbReference>
<dbReference type="Pfam" id="PF02362">
    <property type="entry name" value="B3"/>
    <property type="match status" value="1"/>
</dbReference>
<dbReference type="SMART" id="SM01019">
    <property type="entry name" value="B3"/>
    <property type="match status" value="1"/>
</dbReference>
<dbReference type="SUPFAM" id="SSF101936">
    <property type="entry name" value="DNA-binding pseudobarrel domain"/>
    <property type="match status" value="1"/>
</dbReference>
<dbReference type="PROSITE" id="PS50863">
    <property type="entry name" value="B3"/>
    <property type="match status" value="1"/>
</dbReference>
<comment type="subcellular location">
    <subcellularLocation>
        <location evidence="1">Nucleus</location>
    </subcellularLocation>
</comment>
<comment type="sequence caution" evidence="3">
    <conflict type="erroneous gene model prediction">
        <sequence resource="EMBL-CDS" id="AAF30315"/>
    </conflict>
</comment>
<comment type="sequence caution" evidence="3">
    <conflict type="erroneous termination">
        <sequence resource="EMBL-CDS" id="ABK28546"/>
    </conflict>
    <text>Extended C-terminus.</text>
</comment>
<organism>
    <name type="scientific">Arabidopsis thaliana</name>
    <name type="common">Mouse-ear cress</name>
    <dbReference type="NCBI Taxonomy" id="3702"/>
    <lineage>
        <taxon>Eukaryota</taxon>
        <taxon>Viridiplantae</taxon>
        <taxon>Streptophyta</taxon>
        <taxon>Embryophyta</taxon>
        <taxon>Tracheophyta</taxon>
        <taxon>Spermatophyta</taxon>
        <taxon>Magnoliopsida</taxon>
        <taxon>eudicotyledons</taxon>
        <taxon>Gunneridae</taxon>
        <taxon>Pentapetalae</taxon>
        <taxon>rosids</taxon>
        <taxon>malvids</taxon>
        <taxon>Brassicales</taxon>
        <taxon>Brassicaceae</taxon>
        <taxon>Camelineae</taxon>
        <taxon>Arabidopsis</taxon>
    </lineage>
</organism>
<gene>
    <name type="ordered locus">At3g06220</name>
    <name type="ORF">F28L1.16</name>
</gene>
<name>Y3622_ARATH</name>
<protein>
    <recommendedName>
        <fullName>B3 domain-containing protein At3g06220</fullName>
    </recommendedName>
</protein>
<proteinExistence type="evidence at transcript level"/>
<feature type="chain" id="PRO_0000375141" description="B3 domain-containing protein At3g06220">
    <location>
        <begin position="1"/>
        <end position="174"/>
    </location>
</feature>
<feature type="DNA-binding region" description="TF-B3" evidence="1">
    <location>
        <begin position="8"/>
        <end position="101"/>
    </location>
</feature>
<feature type="region of interest" description="Disordered" evidence="2">
    <location>
        <begin position="114"/>
        <end position="174"/>
    </location>
</feature>
<feature type="compositionally biased region" description="Acidic residues" evidence="2">
    <location>
        <begin position="139"/>
        <end position="150"/>
    </location>
</feature>
<feature type="compositionally biased region" description="Acidic residues" evidence="2">
    <location>
        <begin position="164"/>
        <end position="174"/>
    </location>
</feature>
<keyword id="KW-0238">DNA-binding</keyword>
<keyword id="KW-0539">Nucleus</keyword>
<keyword id="KW-1185">Reference proteome</keyword>
<keyword id="KW-0804">Transcription</keyword>
<keyword id="KW-0805">Transcription regulation</keyword>